<organism>
    <name type="scientific">Escherichia coli O1:K1 / APEC</name>
    <dbReference type="NCBI Taxonomy" id="405955"/>
    <lineage>
        <taxon>Bacteria</taxon>
        <taxon>Pseudomonadati</taxon>
        <taxon>Pseudomonadota</taxon>
        <taxon>Gammaproteobacteria</taxon>
        <taxon>Enterobacterales</taxon>
        <taxon>Enterobacteriaceae</taxon>
        <taxon>Escherichia</taxon>
    </lineage>
</organism>
<name>YCJF_ECOK1</name>
<feature type="chain" id="PRO_1000064837" description="UPF0283 membrane protein YcjF">
    <location>
        <begin position="1"/>
        <end position="353"/>
    </location>
</feature>
<feature type="transmembrane region" description="Helical" evidence="1">
    <location>
        <begin position="70"/>
        <end position="90"/>
    </location>
</feature>
<feature type="transmembrane region" description="Helical" evidence="1">
    <location>
        <begin position="100"/>
        <end position="120"/>
    </location>
</feature>
<feature type="transmembrane region" description="Helical" evidence="1">
    <location>
        <begin position="213"/>
        <end position="233"/>
    </location>
</feature>
<accession>A1AAT4</accession>
<sequence>MTEPLKPRIDFDGPLEVDQNPKFRAQQTFDENQAQNFAPATLDEAQEEEGQVEAVMDAALRPKRSLWRKMVMGGLALFGASVVGQGVQWTMNAWQTQDWVALGGCAAGALIIGAGVGSVVTEWRRLWRLRQRAHERDEARDLLHSHGTGKGRAFCEKLAQQAGIDQSHPALQRWYASIHETQNDREVVSLYAHLVQPVLDAQARREISRSAAESTLMIAVSPLALVDMAFIAWRNLRLINRIATLYGIELGYYSRLRLFKLVLLNIAFAGASELVREVGMDWMSQDLAARLSTRAAQGIGAGLLTARLGIKAMELCRPLPWIDDDKPRLGDFRRQLIGQVKETLQKGKTPSEK</sequence>
<reference key="1">
    <citation type="journal article" date="2007" name="J. Bacteriol.">
        <title>The genome sequence of avian pathogenic Escherichia coli strain O1:K1:H7 shares strong similarities with human extraintestinal pathogenic E. coli genomes.</title>
        <authorList>
            <person name="Johnson T.J."/>
            <person name="Kariyawasam S."/>
            <person name="Wannemuehler Y."/>
            <person name="Mangiamele P."/>
            <person name="Johnson S.J."/>
            <person name="Doetkott C."/>
            <person name="Skyberg J.A."/>
            <person name="Lynne A.M."/>
            <person name="Johnson J.R."/>
            <person name="Nolan L.K."/>
        </authorList>
    </citation>
    <scope>NUCLEOTIDE SEQUENCE [LARGE SCALE GENOMIC DNA]</scope>
</reference>
<comment type="subcellular location">
    <subcellularLocation>
        <location evidence="1">Cell inner membrane</location>
        <topology evidence="1">Multi-pass membrane protein</topology>
    </subcellularLocation>
</comment>
<comment type="similarity">
    <text evidence="1">Belongs to the UPF0283 family.</text>
</comment>
<proteinExistence type="inferred from homology"/>
<keyword id="KW-0997">Cell inner membrane</keyword>
<keyword id="KW-1003">Cell membrane</keyword>
<keyword id="KW-0472">Membrane</keyword>
<keyword id="KW-1185">Reference proteome</keyword>
<keyword id="KW-0812">Transmembrane</keyword>
<keyword id="KW-1133">Transmembrane helix</keyword>
<evidence type="ECO:0000255" key="1">
    <source>
        <dbReference type="HAMAP-Rule" id="MF_01085"/>
    </source>
</evidence>
<dbReference type="EMBL" id="CP000468">
    <property type="protein sequence ID" value="ABJ00774.1"/>
    <property type="molecule type" value="Genomic_DNA"/>
</dbReference>
<dbReference type="RefSeq" id="WP_000138728.1">
    <property type="nucleotide sequence ID" value="NZ_CADILS010000001.1"/>
</dbReference>
<dbReference type="SMR" id="A1AAT4"/>
<dbReference type="KEGG" id="ecv:APECO1_475"/>
<dbReference type="HOGENOM" id="CLU_057693_2_0_6"/>
<dbReference type="Proteomes" id="UP000008216">
    <property type="component" value="Chromosome"/>
</dbReference>
<dbReference type="GO" id="GO:0005886">
    <property type="term" value="C:plasma membrane"/>
    <property type="evidence" value="ECO:0007669"/>
    <property type="project" value="UniProtKB-SubCell"/>
</dbReference>
<dbReference type="HAMAP" id="MF_01085">
    <property type="entry name" value="UPF0283"/>
    <property type="match status" value="1"/>
</dbReference>
<dbReference type="InterPro" id="IPR021147">
    <property type="entry name" value="DUF697"/>
</dbReference>
<dbReference type="InterPro" id="IPR006507">
    <property type="entry name" value="UPF0283"/>
</dbReference>
<dbReference type="NCBIfam" id="TIGR01620">
    <property type="entry name" value="hyp_HI0043"/>
    <property type="match status" value="1"/>
</dbReference>
<dbReference type="PANTHER" id="PTHR39342">
    <property type="entry name" value="UPF0283 MEMBRANE PROTEIN YCJF"/>
    <property type="match status" value="1"/>
</dbReference>
<dbReference type="PANTHER" id="PTHR39342:SF1">
    <property type="entry name" value="UPF0283 MEMBRANE PROTEIN YCJF"/>
    <property type="match status" value="1"/>
</dbReference>
<dbReference type="Pfam" id="PF05128">
    <property type="entry name" value="DUF697"/>
    <property type="match status" value="1"/>
</dbReference>
<gene>
    <name evidence="1" type="primary">ycjF</name>
    <name type="ordered locus">Ecok1_12800</name>
    <name type="ORF">APECO1_475</name>
</gene>
<protein>
    <recommendedName>
        <fullName evidence="1">UPF0283 membrane protein YcjF</fullName>
    </recommendedName>
</protein>